<evidence type="ECO:0000255" key="1">
    <source>
        <dbReference type="HAMAP-Rule" id="MF_00285"/>
    </source>
</evidence>
<evidence type="ECO:0000269" key="2">
    <source>
    </source>
</evidence>
<evidence type="ECO:0000269" key="3">
    <source>
    </source>
</evidence>
<evidence type="ECO:0000269" key="4">
    <source>
    </source>
</evidence>
<evidence type="ECO:0000269" key="5">
    <source>
    </source>
</evidence>
<evidence type="ECO:0000269" key="6">
    <source>
    </source>
</evidence>
<evidence type="ECO:0000269" key="7">
    <source>
    </source>
</evidence>
<evidence type="ECO:0000269" key="8">
    <source>
    </source>
</evidence>
<evidence type="ECO:0000269" key="9">
    <source>
    </source>
</evidence>
<evidence type="ECO:0000269" key="10">
    <source>
    </source>
</evidence>
<evidence type="ECO:0000269" key="11">
    <source>
    </source>
</evidence>
<evidence type="ECO:0000269" key="12">
    <source>
    </source>
</evidence>
<evidence type="ECO:0000269" key="13">
    <source>
    </source>
</evidence>
<evidence type="ECO:0000269" key="14">
    <source>
    </source>
</evidence>
<evidence type="ECO:0000305" key="15"/>
<evidence type="ECO:0007744" key="16">
    <source>
        <dbReference type="PDB" id="1SVJ"/>
    </source>
</evidence>
<evidence type="ECO:0007744" key="17">
    <source>
        <dbReference type="PDB" id="1U7Q"/>
    </source>
</evidence>
<evidence type="ECO:0007744" key="18">
    <source>
        <dbReference type="PDB" id="2A00"/>
    </source>
</evidence>
<evidence type="ECO:0007744" key="19">
    <source>
        <dbReference type="PDB" id="2A29"/>
    </source>
</evidence>
<evidence type="ECO:0007744" key="20">
    <source>
        <dbReference type="PDB" id="5MRW"/>
    </source>
</evidence>
<evidence type="ECO:0007744" key="21">
    <source>
        <dbReference type="PDB" id="6HRA"/>
    </source>
</evidence>
<evidence type="ECO:0007744" key="22">
    <source>
        <dbReference type="PDB" id="6HRB"/>
    </source>
</evidence>
<evidence type="ECO:0007744" key="23">
    <source>
        <dbReference type="PDB" id="7BGY"/>
    </source>
</evidence>
<evidence type="ECO:0007744" key="24">
    <source>
        <dbReference type="PDB" id="7BH1"/>
    </source>
</evidence>
<evidence type="ECO:0007744" key="25">
    <source>
        <dbReference type="PDB" id="7BH2"/>
    </source>
</evidence>
<evidence type="ECO:0007744" key="26">
    <source>
        <dbReference type="PDB" id="7LC3"/>
    </source>
</evidence>
<evidence type="ECO:0007744" key="27">
    <source>
        <dbReference type="PDB" id="7LC6"/>
    </source>
</evidence>
<evidence type="ECO:0007829" key="28">
    <source>
        <dbReference type="PDB" id="5MRW"/>
    </source>
</evidence>
<evidence type="ECO:0007829" key="29">
    <source>
        <dbReference type="PDB" id="7BGY"/>
    </source>
</evidence>
<evidence type="ECO:0007829" key="30">
    <source>
        <dbReference type="PDB" id="7BH2"/>
    </source>
</evidence>
<evidence type="ECO:0007829" key="31">
    <source>
        <dbReference type="PDB" id="7ZRD"/>
    </source>
</evidence>
<evidence type="ECO:0007829" key="32">
    <source>
        <dbReference type="PDB" id="7ZRH"/>
    </source>
</evidence>
<evidence type="ECO:0007829" key="33">
    <source>
        <dbReference type="PDB" id="7ZRI"/>
    </source>
</evidence>
<accession>P03960</accession>
<accession>P78053</accession>
<accession>P78145</accession>
<reference key="1">
    <citation type="journal article" date="1984" name="Proc. Natl. Acad. Sci. U.S.A.">
        <title>Sequence homology between two membrane transport ATPases, the Kdp-ATPase of Escherichia coli and the Ca2+-ATPase of sarcoplasmic reticulum.</title>
        <authorList>
            <person name="Hesse J.E."/>
            <person name="Wieczorek L."/>
            <person name="Altendorf K."/>
            <person name="Reicin A.S."/>
            <person name="Dorus E."/>
            <person name="Epstein W."/>
        </authorList>
    </citation>
    <scope>NUCLEOTIDE SEQUENCE [GENOMIC DNA]</scope>
</reference>
<reference key="2">
    <citation type="submission" date="1998-01" db="EMBL/GenBank/DDBJ databases">
        <authorList>
            <person name="Epstein W."/>
        </authorList>
    </citation>
    <scope>SEQUENCE REVISION TO 274-275 AND 456</scope>
</reference>
<reference key="3">
    <citation type="journal article" date="1996" name="DNA Res.">
        <title>A 718-kb DNA sequence of the Escherichia coli K-12 genome corresponding to the 12.7-28.0 min region on the linkage map.</title>
        <authorList>
            <person name="Oshima T."/>
            <person name="Aiba H."/>
            <person name="Baba T."/>
            <person name="Fujita K."/>
            <person name="Hayashi K."/>
            <person name="Honjo A."/>
            <person name="Ikemoto K."/>
            <person name="Inada T."/>
            <person name="Itoh T."/>
            <person name="Kajihara M."/>
            <person name="Kanai K."/>
            <person name="Kashimoto K."/>
            <person name="Kimura S."/>
            <person name="Kitagawa M."/>
            <person name="Makino K."/>
            <person name="Masuda S."/>
            <person name="Miki T."/>
            <person name="Mizobuchi K."/>
            <person name="Mori H."/>
            <person name="Motomura K."/>
            <person name="Nakamura Y."/>
            <person name="Nashimoto H."/>
            <person name="Nishio Y."/>
            <person name="Saito N."/>
            <person name="Sampei G."/>
            <person name="Seki Y."/>
            <person name="Tagami H."/>
            <person name="Takemoto K."/>
            <person name="Wada C."/>
            <person name="Yamamoto Y."/>
            <person name="Yano M."/>
            <person name="Horiuchi T."/>
        </authorList>
    </citation>
    <scope>NUCLEOTIDE SEQUENCE [LARGE SCALE GENOMIC DNA]</scope>
    <source>
        <strain>K12 / W3110 / ATCC 27325 / DSM 5911</strain>
    </source>
</reference>
<reference key="4">
    <citation type="journal article" date="1997" name="Science">
        <title>The complete genome sequence of Escherichia coli K-12.</title>
        <authorList>
            <person name="Blattner F.R."/>
            <person name="Plunkett G. III"/>
            <person name="Bloch C.A."/>
            <person name="Perna N.T."/>
            <person name="Burland V."/>
            <person name="Riley M."/>
            <person name="Collado-Vides J."/>
            <person name="Glasner J.D."/>
            <person name="Rode C.K."/>
            <person name="Mayhew G.F."/>
            <person name="Gregor J."/>
            <person name="Davis N.W."/>
            <person name="Kirkpatrick H.A."/>
            <person name="Goeden M.A."/>
            <person name="Rose D.J."/>
            <person name="Mau B."/>
            <person name="Shao Y."/>
        </authorList>
    </citation>
    <scope>NUCLEOTIDE SEQUENCE [LARGE SCALE GENOMIC DNA]</scope>
    <source>
        <strain>K12 / MG1655 / ATCC 47076</strain>
    </source>
</reference>
<reference key="5">
    <citation type="journal article" date="2006" name="Mol. Syst. Biol.">
        <title>Highly accurate genome sequences of Escherichia coli K-12 strains MG1655 and W3110.</title>
        <authorList>
            <person name="Hayashi K."/>
            <person name="Morooka N."/>
            <person name="Yamamoto Y."/>
            <person name="Fujita K."/>
            <person name="Isono K."/>
            <person name="Choi S."/>
            <person name="Ohtsubo E."/>
            <person name="Baba T."/>
            <person name="Wanner B.L."/>
            <person name="Mori H."/>
            <person name="Horiuchi T."/>
        </authorList>
    </citation>
    <scope>NUCLEOTIDE SEQUENCE [LARGE SCALE GENOMIC DNA]</scope>
    <source>
        <strain>K12 / W3110 / ATCC 27325 / DSM 5911</strain>
    </source>
</reference>
<reference key="6">
    <citation type="journal article" date="1988" name="Eur. J. Biochem.">
        <title>The K+-translocating Kdp-ATPase from Escherichia coli. Purification, enzymatic properties and production of complex- and subunit-specific antisera.</title>
        <authorList>
            <person name="Siebers A."/>
            <person name="Altendorf K."/>
        </authorList>
    </citation>
    <scope>FUNCTION IN POTASSIUM TRANSPORT</scope>
    <scope>CATALYTIC ACTIVITY</scope>
    <scope>ACTIVITY REGULATION</scope>
    <scope>SUBUNIT</scope>
    <scope>SUBCELLULAR LOCATION</scope>
</reference>
<reference key="7">
    <citation type="journal article" date="1992" name="J. Bacteriol.">
        <title>The products of the kdpDE operon are required for expression of the Kdp ATPase of Escherichia coli.</title>
        <authorList>
            <person name="Polarek J.W."/>
            <person name="Williams G."/>
            <person name="Epstein W."/>
        </authorList>
    </citation>
    <scope>INDUCTION</scope>
    <source>
        <strain>K12</strain>
    </source>
</reference>
<reference key="8">
    <citation type="journal article" date="1992" name="Mol. Microbiol.">
        <title>The phosphorylation site of the Kdp-ATPase of Escherichia coli: site-directed mutagenesis of the aspartic acid residues 300 and 307 of the KdpB subunit.</title>
        <authorList>
            <person name="Puppe W."/>
            <person name="Siebers A."/>
            <person name="Altendorf K."/>
        </authorList>
    </citation>
    <scope>ACTIVE SITE</scope>
    <scope>MUTAGENESIS OF ASP-300 AND ASP-307</scope>
</reference>
<reference key="9">
    <citation type="journal article" date="1993" name="Biochim. Biophys. Acta">
        <title>ATP-driven potassium transport in right-side-out membrane vesicles via the Kdp system of Escherichia coli.</title>
        <authorList>
            <person name="Kollmann R."/>
            <person name="Altendorf K."/>
        </authorList>
    </citation>
    <scope>FUNCTION IN POTASSIUM TRANSPORT</scope>
    <source>
        <strain>K12</strain>
    </source>
</reference>
<reference key="10">
    <citation type="journal article" date="1998" name="Biochim. Biophys. Acta">
        <title>Assembly of the Kdp complex, the multi-subunit K+-transport ATPase of Escherichia coli.</title>
        <authorList>
            <person name="Gassel M."/>
            <person name="Siebers A."/>
            <person name="Epstein W."/>
            <person name="Altendorf K."/>
        </authorList>
    </citation>
    <scope>SUBUNIT</scope>
    <source>
        <strain>K12</strain>
    </source>
</reference>
<reference key="11">
    <citation type="journal article" date="1999" name="J. Biol. Chem.">
        <title>The KdpF subunit is part of the K(+)-translocating Kdp complex of Escherichia coli and is responsible for stabilization of the complex in vitro.</title>
        <authorList>
            <person name="Gassel M."/>
            <person name="Mollenkamp T."/>
            <person name="Puppe W."/>
            <person name="Altendorf K."/>
        </authorList>
    </citation>
    <scope>SUBUNIT</scope>
    <source>
        <strain>K12</strain>
    </source>
</reference>
<reference key="12">
    <citation type="journal article" date="2005" name="Science">
        <title>Global topology analysis of the Escherichia coli inner membrane proteome.</title>
        <authorList>
            <person name="Daley D.O."/>
            <person name="Rapp M."/>
            <person name="Granseth E."/>
            <person name="Melen K."/>
            <person name="Drew D."/>
            <person name="von Heijne G."/>
        </authorList>
    </citation>
    <scope>SUBCELLULAR LOCATION</scope>
    <source>
        <strain>K12 / MG1655 / ATCC 47076</strain>
    </source>
</reference>
<reference key="13">
    <citation type="journal article" date="2008" name="Biochemistry">
        <title>K+-translocating KdpFABC P-type ATPase from Escherichia coli acts as a functional and structural dimer.</title>
        <authorList>
            <person name="Heitkamp T."/>
            <person name="Kalinowski R."/>
            <person name="Boettcher B."/>
            <person name="Boersch M."/>
            <person name="Altendorf K."/>
            <person name="Greie J.C."/>
        </authorList>
    </citation>
    <scope>SUBUNIT</scope>
</reference>
<reference key="14">
    <citation type="journal article" date="2013" name="Biochemistry">
        <title>Mechanistic analysis of the pump cycle of the KdpFABC P-type ATPase.</title>
        <authorList>
            <person name="Damnjanovic B."/>
            <person name="Weber A."/>
            <person name="Potschies M."/>
            <person name="Greie J.C."/>
            <person name="Apell H.J."/>
        </authorList>
    </citation>
    <scope>FUNCTION</scope>
</reference>
<reference evidence="16 17" key="15">
    <citation type="journal article" date="2004" name="J. Mol. Biol.">
        <title>Inter-domain motions of the N-domain of the KdpFABC complex, a P-type ATPase, are not driven by ATP-induced conformational changes.</title>
        <authorList>
            <person name="Haupt M."/>
            <person name="Bramkamp M."/>
            <person name="Coles M."/>
            <person name="Altendorf K."/>
            <person name="Kessler H."/>
        </authorList>
    </citation>
    <scope>STRUCTURE BY NMR OF 316-451</scope>
</reference>
<reference evidence="18 19" key="16">
    <citation type="journal article" date="2006" name="J. Biol. Chem.">
        <title>The holo-form of the nucleotide binding domain of the KdpFABC complex from Escherichia coli reveals a new binding mode.</title>
        <authorList>
            <person name="Haupt M."/>
            <person name="Bramkamp M."/>
            <person name="Heller M."/>
            <person name="Coles M."/>
            <person name="Deckers-Hebestreit G."/>
            <person name="Herkenhoff-Hesselmann B."/>
            <person name="Altendorf K."/>
            <person name="Kessler H."/>
        </authorList>
    </citation>
    <scope>STRUCTURE BY NMR OF 316-451 IN COMPLEX WITH ATP ANALOG</scope>
    <scope>FUNCTION AS AN ATPASE</scope>
    <scope>ATP-BINDING</scope>
    <scope>MUTAGENESIS OF PHE-377; SER-384; LYS-395 AND ASP-399</scope>
</reference>
<reference evidence="20" key="17">
    <citation type="journal article" date="2017" name="Nature">
        <title>Crystal structure of the potassium-importing KdpFABC membrane complex.</title>
        <authorList>
            <person name="Huang C.S."/>
            <person name="Pedersen B.P."/>
            <person name="Stokes D.L."/>
        </authorList>
    </citation>
    <scope>X-RAY CRYSTALLOGRAPHY (2.90 ANGSTROMS) OF 9-682 IN COMPLEX WITH KDPA; KDPC AND KDPF</scope>
    <scope>PHOSPHORYLATION AT SER-162</scope>
    <scope>ACTIVITY REGULATION</scope>
    <scope>SUBUNIT</scope>
    <scope>SUBCELLULAR LOCATION</scope>
    <scope>TOPOLOGY</scope>
    <scope>DOMAIN</scope>
</reference>
<reference evidence="21 22" key="18">
    <citation type="journal article" date="2018" name="Nat. Commun.">
        <title>Cryo-EM structures of KdpFABC suggest a K+ transport mechanism via two inter-subunit half-channels.</title>
        <authorList>
            <person name="Stock C."/>
            <person name="Hielkema L."/>
            <person name="Tascon I."/>
            <person name="Wunnicke D."/>
            <person name="Oostergetel G.T."/>
            <person name="Azkargorta M."/>
            <person name="Paulino C."/>
            <person name="Haenelt I."/>
        </authorList>
    </citation>
    <scope>STRUCTURE BY ELECTRON MICROSCOPY (3.70 ANGSTROMS) OF KDPFABC COMPLEX IN E1 AND E2 STATE</scope>
    <scope>FUNCTION</scope>
    <scope>REACTION MECHANISM</scope>
    <scope>PHOSPHORYLATION AT SER-162</scope>
    <scope>ACTIVITY REGULATION</scope>
    <scope>SUBUNIT</scope>
    <scope>SUBCELLULAR LOCATION</scope>
    <scope>DOMAIN</scope>
</reference>
<reference evidence="23 24 25 26 27" key="19">
    <citation type="journal article" date="2021" name="Proc. Natl. Acad. Sci. U.S.A.">
        <title>Structural basis for potassium transport in prokaryotes by KdpFABC.</title>
        <authorList>
            <person name="Sweet M.E."/>
            <person name="Larsen C."/>
            <person name="Zhang X."/>
            <person name="Schlame M."/>
            <person name="Pedersen B.P."/>
            <person name="Stokes D.L."/>
        </authorList>
    </citation>
    <scope>STRUCTURE BY ELECTRON MICROSCOPY (2.90 ANGSTROMS) OF KDPFABC COMPLEX IN MAJOR ENZYMATIC STATES</scope>
    <scope>FUNCTION</scope>
    <scope>REACTION MECHANISM</scope>
    <scope>CATALYTIC ACTIVITY</scope>
    <scope>DOMAIN</scope>
</reference>
<keyword id="KW-0002">3D-structure</keyword>
<keyword id="KW-0067">ATP-binding</keyword>
<keyword id="KW-0997">Cell inner membrane</keyword>
<keyword id="KW-1003">Cell membrane</keyword>
<keyword id="KW-0406">Ion transport</keyword>
<keyword id="KW-0460">Magnesium</keyword>
<keyword id="KW-0472">Membrane</keyword>
<keyword id="KW-0479">Metal-binding</keyword>
<keyword id="KW-0547">Nucleotide-binding</keyword>
<keyword id="KW-0597">Phosphoprotein</keyword>
<keyword id="KW-0630">Potassium</keyword>
<keyword id="KW-0633">Potassium transport</keyword>
<keyword id="KW-1185">Reference proteome</keyword>
<keyword id="KW-1278">Translocase</keyword>
<keyword id="KW-0812">Transmembrane</keyword>
<keyword id="KW-1133">Transmembrane helix</keyword>
<keyword id="KW-0813">Transport</keyword>
<proteinExistence type="evidence at protein level"/>
<comment type="function">
    <text evidence="6 8 9 11 12 13">Part of the high-affinity ATP-driven potassium transport (or Kdp) system, which catalyzes the hydrolysis of ATP coupled with the electrogenic transport of potassium into the cytoplasm (PubMed:23930894, PubMed:2849541, PubMed:8499455). This subunit is responsible for energy coupling to the transport system and for the release of the potassium ions to the cytoplasm (PubMed:16354672, PubMed:30478378, PubMed:34272288).</text>
</comment>
<comment type="catalytic activity">
    <reaction evidence="1 9 12">
        <text>K(+)(out) + ATP + H2O = K(+)(in) + ADP + phosphate + H(+)</text>
        <dbReference type="Rhea" id="RHEA:16777"/>
        <dbReference type="ChEBI" id="CHEBI:15377"/>
        <dbReference type="ChEBI" id="CHEBI:15378"/>
        <dbReference type="ChEBI" id="CHEBI:29103"/>
        <dbReference type="ChEBI" id="CHEBI:30616"/>
        <dbReference type="ChEBI" id="CHEBI:43474"/>
        <dbReference type="ChEBI" id="CHEBI:456216"/>
        <dbReference type="EC" id="7.2.2.6"/>
    </reaction>
    <physiologicalReaction direction="left-to-right" evidence="1 9 12">
        <dbReference type="Rhea" id="RHEA:16778"/>
    </physiologicalReaction>
</comment>
<comment type="activity regulation">
    <text evidence="9 10 11">ATPase activity is inhibited by phosphorylation at Ser-162 (PubMed:28636601, PubMed:30478378). ATPase activity is inhibited by vanadate, fluorescein isothiocyanate, N,N'-dicyclohexylcarbodiimide and N-ethylmaleimide.</text>
</comment>
<comment type="subunit">
    <text evidence="2 7 9 10 11 14">The system is composed of three essential subunits: KdpA, KdpB and KdpC (PubMed:2849541, PubMed:28636601, PubMed:30478378, PubMed:9858692). The complex also contains KdpF, a small non-essential subunit (PubMed:10608856, PubMed:28636601, PubMed:30478378). The KdpFABC complex exists as a dimer above concentrations of 30-50 nM, whereas the complex exists as a functional monomer at lower concentrations (PubMed:18298081).</text>
</comment>
<comment type="interaction">
    <interactant intactId="EBI-1116956">
        <id>P03960</id>
    </interactant>
    <interactant intactId="EBI-6997216">
        <id>P03961</id>
        <label>kdpC</label>
    </interactant>
    <organismsDiffer>false</organismsDiffer>
    <experiments>2</experiments>
</comment>
<comment type="subcellular location">
    <subcellularLocation>
        <location evidence="1 5 9 10 11">Cell inner membrane</location>
        <topology evidence="1 5 10 11">Multi-pass membrane protein</topology>
    </subcellularLocation>
</comment>
<comment type="induction">
    <text evidence="4">Transcriptionally regulated by the KdpD/KdpE two-component regulatory system.</text>
</comment>
<comment type="domain">
    <text evidence="10 11 12">A protein-embedded tunnel connects the potassium ion in KdpA to a water molecule at the canonical cation site in the transmembrane domain of KdpB (PubMed:28636601, PubMed:30478378, PubMed:34272288). The structures suggest a translocation pathway for potassium via two inter-subunit half-channels along KdpA and KdpB, integrating KdpB directly in the transport process (PubMed:30478378). The periplasmic potassium ion probably enters the selectivity filter of KdpA, travels through the water-filled tunnel to reach KdpB, and is released to the cytoplasm by KdpB (PubMed:34272288). KdpB undergoes conformational changes, whereas KdpA, KdpC and KdpF remain static (PubMed:34272288).</text>
</comment>
<comment type="PTM">
    <text evidence="10 11">Phosphorylated at Ser-162, which leads to the inhibition of the ATPase activity.</text>
</comment>
<comment type="similarity">
    <text evidence="1">Belongs to the cation transport ATPase (P-type) (TC 3.A.3) family. Type IA subfamily.</text>
</comment>
<sequence length="682" mass="72199">MSRKQLALFEPTLVVQALKEAVKKLNPQAQWRNPVMFIVWIGSLLTTCISIAMASGAMPGNALFSAAISGWLWITVLFANFAEALAEGRSKAQANSLKGVKKTAFARKLREPKYGAAADKVPADQLRKGDIVLVEAGDIIPCDGEVIEGGASVDESAITGESAPVIRESGGDFASVTGGTRILSDWLVIECSVNPGETFLDRMIAMVEGAQRRKTPNEIALTILLIALTIVFLLATATLWPFSAWGGNAVSVTVLVALLVCLIPTTIGGLLSAIGVAGMSRMLGANVIATSGRAVEAAGDVDVLLLDKTGTITLGNRQASEFIPAQGVDEKTLADAAQLASLADETPEGRSIVILAKQRFNLRERDVQSLHATFVPFTAQSRMSGINIDNRMIRKGSVDAIRRHVEANGGHFPTDVDQKVDQVARQGATPLVVVEGSRVLGVIALKDIVKGGIKERFAQLRKMGIKTVMITGDNRLTAAAIAAEAGVDDFLAEATPEAKLALIRQYQAEGRLVAMTGDGTNDAPALAQADVAVAMNSGTQAAKEAGNMVDLDSNPTKLIEVVHIGKQMLMTRGSLTTFSIANDVAKYFAIIPAAFAATYPQLNALNIMCLHSPDSAILSAVIFNALIIVFLIPLALKGVSYKPLTASAMLRRNLWIYGLGGLLVPFIGIKVIDLLLTVCGLV</sequence>
<gene>
    <name evidence="1" type="primary">kdpB</name>
    <name type="ordered locus">b0697</name>
    <name type="ordered locus">JW0685</name>
</gene>
<feature type="chain" id="PRO_0000046115" description="Potassium-transporting ATPase ATP-binding subunit">
    <location>
        <begin position="1"/>
        <end position="682"/>
    </location>
</feature>
<feature type="topological domain" description="Cytoplasmic" evidence="10">
    <location>
        <begin position="1"/>
        <end position="33"/>
    </location>
</feature>
<feature type="transmembrane region" description="Helical" evidence="10 20">
    <location>
        <begin position="34"/>
        <end position="55"/>
    </location>
</feature>
<feature type="topological domain" description="Periplasmic" evidence="10">
    <location>
        <begin position="56"/>
        <end position="61"/>
    </location>
</feature>
<feature type="transmembrane region" description="Helical" evidence="10 20">
    <location>
        <begin position="62"/>
        <end position="80"/>
    </location>
</feature>
<feature type="topological domain" description="Cytoplasmic" evidence="10">
    <location>
        <begin position="81"/>
        <end position="222"/>
    </location>
</feature>
<feature type="transmembrane region" description="Helical" evidence="10 20">
    <location>
        <begin position="223"/>
        <end position="242"/>
    </location>
</feature>
<feature type="topological domain" description="Periplasmic" evidence="10">
    <location>
        <begin position="243"/>
        <end position="251"/>
    </location>
</feature>
<feature type="transmembrane region" description="Helical" evidence="10 20">
    <location>
        <begin position="252"/>
        <end position="263"/>
    </location>
</feature>
<feature type="topological domain" description="Cytoplasmic" evidence="10">
    <location>
        <begin position="264"/>
        <end position="574"/>
    </location>
</feature>
<feature type="transmembrane region" description="Helical" evidence="10 20">
    <location>
        <begin position="575"/>
        <end position="595"/>
    </location>
</feature>
<feature type="topological domain" description="Periplasmic" evidence="10">
    <location>
        <begin position="596"/>
        <end position="612"/>
    </location>
</feature>
<feature type="transmembrane region" description="Helical" evidence="10 20">
    <location>
        <begin position="613"/>
        <end position="631"/>
    </location>
</feature>
<feature type="topological domain" description="Cytoplasmic" evidence="10">
    <location>
        <begin position="632"/>
        <end position="653"/>
    </location>
</feature>
<feature type="transmembrane region" description="Helical" evidence="10 20">
    <location>
        <begin position="654"/>
        <end position="678"/>
    </location>
</feature>
<feature type="topological domain" description="Periplasmic" evidence="10">
    <location>
        <begin position="679"/>
        <end position="682"/>
    </location>
</feature>
<feature type="active site" description="4-aspartylphosphate intermediate" evidence="1 3">
    <location>
        <position position="307"/>
    </location>
</feature>
<feature type="binding site" evidence="1 6 18 19">
    <location>
        <position position="344"/>
    </location>
    <ligand>
        <name>ATP</name>
        <dbReference type="ChEBI" id="CHEBI:30616"/>
    </ligand>
</feature>
<feature type="binding site" evidence="1 6 18">
    <location>
        <position position="348"/>
    </location>
    <ligand>
        <name>ATP</name>
        <dbReference type="ChEBI" id="CHEBI:30616"/>
    </ligand>
</feature>
<feature type="binding site" evidence="1 6 18 19">
    <location>
        <begin position="377"/>
        <end position="384"/>
    </location>
    <ligand>
        <name>ATP</name>
        <dbReference type="ChEBI" id="CHEBI:30616"/>
    </ligand>
</feature>
<feature type="binding site" evidence="1 6 18 19">
    <location>
        <position position="395"/>
    </location>
    <ligand>
        <name>ATP</name>
        <dbReference type="ChEBI" id="CHEBI:30616"/>
    </ligand>
</feature>
<feature type="binding site" evidence="1">
    <location>
        <position position="518"/>
    </location>
    <ligand>
        <name>Mg(2+)</name>
        <dbReference type="ChEBI" id="CHEBI:18420"/>
    </ligand>
</feature>
<feature type="binding site" evidence="1">
    <location>
        <position position="522"/>
    </location>
    <ligand>
        <name>Mg(2+)</name>
        <dbReference type="ChEBI" id="CHEBI:18420"/>
    </ligand>
</feature>
<feature type="modified residue" description="Phosphoserine" evidence="10 11">
    <location>
        <position position="162"/>
    </location>
</feature>
<feature type="mutagenesis site" description="Does not affect formation of the phosphorylated intermediate." evidence="3">
    <original>D</original>
    <variation>E</variation>
    <variation>N</variation>
    <location>
        <position position="300"/>
    </location>
</feature>
<feature type="mutagenesis site" description="Unable to form a phosphorylated intermediate and lacks ATPase activity." evidence="3">
    <original>D</original>
    <variation>E</variation>
    <variation>N</variation>
    <variation>Q</variation>
    <location>
        <position position="307"/>
    </location>
</feature>
<feature type="mutagenesis site" description="Loss of ATPase activity." evidence="6">
    <original>F</original>
    <variation>A</variation>
    <location>
        <position position="377"/>
    </location>
</feature>
<feature type="mutagenesis site" description="Slight decrease in ATPase activity." evidence="6">
    <original>F</original>
    <variation>Y</variation>
    <location>
        <position position="377"/>
    </location>
</feature>
<feature type="mutagenesis site" description="Decrease in ATPase activity." evidence="6">
    <original>S</original>
    <variation>A</variation>
    <variation>T</variation>
    <location>
        <position position="384"/>
    </location>
</feature>
<feature type="mutagenesis site" description="Strong decrease in ATPase activity." evidence="6">
    <original>K</original>
    <variation>A</variation>
    <location>
        <position position="395"/>
    </location>
</feature>
<feature type="mutagenesis site" description="Decrease in ATPase activity." evidence="6">
    <original>D</original>
    <variation>A</variation>
    <location>
        <position position="399"/>
    </location>
</feature>
<feature type="sequence conflict" description="In Ref. 1; AAB96336." evidence="15" ref="1">
    <original>EP</original>
    <variation>DA</variation>
    <location>
        <begin position="111"/>
        <end position="112"/>
    </location>
</feature>
<feature type="helix" evidence="28">
    <location>
        <begin position="12"/>
        <end position="23"/>
    </location>
</feature>
<feature type="helix" evidence="29">
    <location>
        <begin position="27"/>
        <end position="30"/>
    </location>
</feature>
<feature type="helix" evidence="28">
    <location>
        <begin position="34"/>
        <end position="56"/>
    </location>
</feature>
<feature type="helix" evidence="28">
    <location>
        <begin position="63"/>
        <end position="102"/>
    </location>
</feature>
<feature type="strand" evidence="28">
    <location>
        <begin position="107"/>
        <end position="113"/>
    </location>
</feature>
<feature type="strand" evidence="28">
    <location>
        <begin position="118"/>
        <end position="120"/>
    </location>
</feature>
<feature type="helix" evidence="28">
    <location>
        <begin position="123"/>
        <end position="125"/>
    </location>
</feature>
<feature type="strand" evidence="28">
    <location>
        <begin position="131"/>
        <end position="134"/>
    </location>
</feature>
<feature type="strand" evidence="33">
    <location>
        <begin position="138"/>
        <end position="140"/>
    </location>
</feature>
<feature type="strand" evidence="28">
    <location>
        <begin position="144"/>
        <end position="154"/>
    </location>
</feature>
<feature type="helix" evidence="28">
    <location>
        <begin position="156"/>
        <end position="159"/>
    </location>
</feature>
<feature type="strand" evidence="28">
    <location>
        <begin position="164"/>
        <end position="171"/>
    </location>
</feature>
<feature type="strand" evidence="31">
    <location>
        <begin position="178"/>
        <end position="182"/>
    </location>
</feature>
<feature type="strand" evidence="28">
    <location>
        <begin position="187"/>
        <end position="190"/>
    </location>
</feature>
<feature type="strand" evidence="30">
    <location>
        <begin position="195"/>
        <end position="197"/>
    </location>
</feature>
<feature type="helix" evidence="28">
    <location>
        <begin position="199"/>
        <end position="207"/>
    </location>
</feature>
<feature type="strand" evidence="28">
    <location>
        <begin position="208"/>
        <end position="211"/>
    </location>
</feature>
<feature type="helix" evidence="28">
    <location>
        <begin position="216"/>
        <end position="237"/>
    </location>
</feature>
<feature type="helix" evidence="28">
    <location>
        <begin position="239"/>
        <end position="246"/>
    </location>
</feature>
<feature type="helix" evidence="28">
    <location>
        <begin position="252"/>
        <end position="262"/>
    </location>
</feature>
<feature type="helix" evidence="28">
    <location>
        <begin position="265"/>
        <end position="268"/>
    </location>
</feature>
<feature type="helix" evidence="28">
    <location>
        <begin position="271"/>
        <end position="284"/>
    </location>
</feature>
<feature type="strand" evidence="29">
    <location>
        <begin position="287"/>
        <end position="289"/>
    </location>
</feature>
<feature type="helix" evidence="28">
    <location>
        <begin position="292"/>
        <end position="299"/>
    </location>
</feature>
<feature type="strand" evidence="28">
    <location>
        <begin position="302"/>
        <end position="307"/>
    </location>
</feature>
<feature type="strand" evidence="28">
    <location>
        <begin position="311"/>
        <end position="315"/>
    </location>
</feature>
<feature type="strand" evidence="28">
    <location>
        <begin position="317"/>
        <end position="323"/>
    </location>
</feature>
<feature type="strand" evidence="29">
    <location>
        <begin position="326"/>
        <end position="328"/>
    </location>
</feature>
<feature type="helix" evidence="28">
    <location>
        <begin position="330"/>
        <end position="341"/>
    </location>
</feature>
<feature type="helix" evidence="28">
    <location>
        <begin position="347"/>
        <end position="360"/>
    </location>
</feature>
<feature type="turn" evidence="30">
    <location>
        <begin position="363"/>
        <end position="365"/>
    </location>
</feature>
<feature type="helix" evidence="28">
    <location>
        <begin position="367"/>
        <end position="370"/>
    </location>
</feature>
<feature type="strand" evidence="28">
    <location>
        <begin position="374"/>
        <end position="378"/>
    </location>
</feature>
<feature type="turn" evidence="28">
    <location>
        <begin position="379"/>
        <end position="382"/>
    </location>
</feature>
<feature type="strand" evidence="28">
    <location>
        <begin position="383"/>
        <end position="386"/>
    </location>
</feature>
<feature type="strand" evidence="28">
    <location>
        <begin position="389"/>
        <end position="391"/>
    </location>
</feature>
<feature type="strand" evidence="28">
    <location>
        <begin position="393"/>
        <end position="396"/>
    </location>
</feature>
<feature type="helix" evidence="28">
    <location>
        <begin position="398"/>
        <end position="405"/>
    </location>
</feature>
<feature type="helix" evidence="28">
    <location>
        <begin position="406"/>
        <end position="408"/>
    </location>
</feature>
<feature type="helix" evidence="28">
    <location>
        <begin position="414"/>
        <end position="426"/>
    </location>
</feature>
<feature type="strand" evidence="28">
    <location>
        <begin position="429"/>
        <end position="435"/>
    </location>
</feature>
<feature type="strand" evidence="28">
    <location>
        <begin position="438"/>
        <end position="447"/>
    </location>
</feature>
<feature type="strand" evidence="32">
    <location>
        <begin position="448"/>
        <end position="451"/>
    </location>
</feature>
<feature type="helix" evidence="28">
    <location>
        <begin position="453"/>
        <end position="462"/>
    </location>
</feature>
<feature type="strand" evidence="28">
    <location>
        <begin position="466"/>
        <end position="470"/>
    </location>
</feature>
<feature type="helix" evidence="28">
    <location>
        <begin position="477"/>
        <end position="485"/>
    </location>
</feature>
<feature type="strand" evidence="28">
    <location>
        <begin position="488"/>
        <end position="491"/>
    </location>
</feature>
<feature type="helix" evidence="28">
    <location>
        <begin position="496"/>
        <end position="507"/>
    </location>
</feature>
<feature type="turn" evidence="28">
    <location>
        <begin position="508"/>
        <end position="510"/>
    </location>
</feature>
<feature type="strand" evidence="28">
    <location>
        <begin position="513"/>
        <end position="518"/>
    </location>
</feature>
<feature type="turn" evidence="28">
    <location>
        <begin position="519"/>
        <end position="522"/>
    </location>
</feature>
<feature type="helix" evidence="28">
    <location>
        <begin position="523"/>
        <end position="528"/>
    </location>
</feature>
<feature type="strand" evidence="28">
    <location>
        <begin position="529"/>
        <end position="536"/>
    </location>
</feature>
<feature type="helix" evidence="28">
    <location>
        <begin position="539"/>
        <end position="545"/>
    </location>
</feature>
<feature type="strand" evidence="28">
    <location>
        <begin position="548"/>
        <end position="552"/>
    </location>
</feature>
<feature type="helix" evidence="28">
    <location>
        <begin position="557"/>
        <end position="581"/>
    </location>
</feature>
<feature type="helix" evidence="28">
    <location>
        <begin position="583"/>
        <end position="594"/>
    </location>
</feature>
<feature type="turn" evidence="28">
    <location>
        <begin position="595"/>
        <end position="598"/>
    </location>
</feature>
<feature type="helix" evidence="28">
    <location>
        <begin position="600"/>
        <end position="605"/>
    </location>
</feature>
<feature type="helix" evidence="28">
    <location>
        <begin position="613"/>
        <end position="637"/>
    </location>
</feature>
<feature type="helix" evidence="28">
    <location>
        <begin position="646"/>
        <end position="679"/>
    </location>
</feature>
<protein>
    <recommendedName>
        <fullName evidence="1">Potassium-transporting ATPase ATP-binding subunit</fullName>
        <ecNumber evidence="1 9 12">7.2.2.6</ecNumber>
    </recommendedName>
    <alternativeName>
        <fullName evidence="1">ATP phosphohydrolase [potassium-transporting] B chain</fullName>
    </alternativeName>
    <alternativeName>
        <fullName evidence="1">Potassium-binding and translocating subunit B</fullName>
    </alternativeName>
    <alternativeName>
        <fullName evidence="1">Potassium-translocating ATPase B chain</fullName>
    </alternativeName>
</protein>
<organism>
    <name type="scientific">Escherichia coli (strain K12)</name>
    <dbReference type="NCBI Taxonomy" id="83333"/>
    <lineage>
        <taxon>Bacteria</taxon>
        <taxon>Pseudomonadati</taxon>
        <taxon>Pseudomonadota</taxon>
        <taxon>Gammaproteobacteria</taxon>
        <taxon>Enterobacterales</taxon>
        <taxon>Enterobacteriaceae</taxon>
        <taxon>Escherichia</taxon>
    </lineage>
</organism>
<dbReference type="EC" id="7.2.2.6" evidence="1 9 12"/>
<dbReference type="EMBL" id="K02670">
    <property type="protein sequence ID" value="AAB96336.1"/>
    <property type="molecule type" value="Genomic_DNA"/>
</dbReference>
<dbReference type="EMBL" id="U00096">
    <property type="protein sequence ID" value="AAC73791.1"/>
    <property type="molecule type" value="Genomic_DNA"/>
</dbReference>
<dbReference type="EMBL" id="AP009048">
    <property type="protein sequence ID" value="BAA35354.2"/>
    <property type="molecule type" value="Genomic_DNA"/>
</dbReference>
<dbReference type="PIR" id="H64804">
    <property type="entry name" value="PWECBK"/>
</dbReference>
<dbReference type="RefSeq" id="NP_415225.1">
    <property type="nucleotide sequence ID" value="NC_000913.3"/>
</dbReference>
<dbReference type="RefSeq" id="WP_000087939.1">
    <property type="nucleotide sequence ID" value="NZ_SSZK01000045.1"/>
</dbReference>
<dbReference type="PDB" id="1SVJ">
    <property type="method" value="NMR"/>
    <property type="chains" value="A=316-451"/>
</dbReference>
<dbReference type="PDB" id="1U7Q">
    <property type="method" value="NMR"/>
    <property type="chains" value="A=316-451"/>
</dbReference>
<dbReference type="PDB" id="2A00">
    <property type="method" value="NMR"/>
    <property type="chains" value="A=316-451"/>
</dbReference>
<dbReference type="PDB" id="2A29">
    <property type="method" value="NMR"/>
    <property type="chains" value="A=316-451"/>
</dbReference>
<dbReference type="PDB" id="5MRW">
    <property type="method" value="X-ray"/>
    <property type="resolution" value="2.90 A"/>
    <property type="chains" value="B/F/J=9-682"/>
</dbReference>
<dbReference type="PDB" id="6HRA">
    <property type="method" value="EM"/>
    <property type="resolution" value="3.70 A"/>
    <property type="chains" value="B=1-682"/>
</dbReference>
<dbReference type="PDB" id="6HRB">
    <property type="method" value="EM"/>
    <property type="resolution" value="4.00 A"/>
    <property type="chains" value="B=1-682"/>
</dbReference>
<dbReference type="PDB" id="7BGY">
    <property type="method" value="EM"/>
    <property type="resolution" value="2.90 A"/>
    <property type="chains" value="B=1-682"/>
</dbReference>
<dbReference type="PDB" id="7BH1">
    <property type="method" value="EM"/>
    <property type="resolution" value="3.38 A"/>
    <property type="chains" value="B=1-682"/>
</dbReference>
<dbReference type="PDB" id="7BH2">
    <property type="method" value="EM"/>
    <property type="resolution" value="3.00 A"/>
    <property type="chains" value="B=1-682"/>
</dbReference>
<dbReference type="PDB" id="7LC3">
    <property type="method" value="EM"/>
    <property type="resolution" value="3.23 A"/>
    <property type="chains" value="B=1-682"/>
</dbReference>
<dbReference type="PDB" id="7LC6">
    <property type="method" value="EM"/>
    <property type="resolution" value="3.70 A"/>
    <property type="chains" value="B=1-682"/>
</dbReference>
<dbReference type="PDB" id="7NNL">
    <property type="method" value="EM"/>
    <property type="resolution" value="3.10 A"/>
    <property type="chains" value="B=1-682"/>
</dbReference>
<dbReference type="PDB" id="7NNP">
    <property type="method" value="EM"/>
    <property type="resolution" value="3.20 A"/>
    <property type="chains" value="B=1-682"/>
</dbReference>
<dbReference type="PDB" id="7ZRD">
    <property type="method" value="EM"/>
    <property type="resolution" value="3.30 A"/>
    <property type="chains" value="B=1-682"/>
</dbReference>
<dbReference type="PDB" id="7ZRE">
    <property type="method" value="EM"/>
    <property type="resolution" value="3.40 A"/>
    <property type="chains" value="B=1-682"/>
</dbReference>
<dbReference type="PDB" id="7ZRG">
    <property type="method" value="EM"/>
    <property type="resolution" value="3.50 A"/>
    <property type="chains" value="B=1-682"/>
</dbReference>
<dbReference type="PDB" id="7ZRH">
    <property type="method" value="EM"/>
    <property type="resolution" value="3.40 A"/>
    <property type="chains" value="B=1-682"/>
</dbReference>
<dbReference type="PDB" id="7ZRI">
    <property type="method" value="EM"/>
    <property type="resolution" value="3.50 A"/>
    <property type="chains" value="B=1-682"/>
</dbReference>
<dbReference type="PDB" id="7ZRJ">
    <property type="method" value="EM"/>
    <property type="resolution" value="3.70 A"/>
    <property type="chains" value="B=1-682"/>
</dbReference>
<dbReference type="PDB" id="7ZRK">
    <property type="method" value="EM"/>
    <property type="resolution" value="3.10 A"/>
    <property type="chains" value="B=1-682"/>
</dbReference>
<dbReference type="PDB" id="7ZRL">
    <property type="method" value="EM"/>
    <property type="resolution" value="4.00 A"/>
    <property type="chains" value="B=1-682"/>
</dbReference>
<dbReference type="PDB" id="7ZRM">
    <property type="method" value="EM"/>
    <property type="resolution" value="3.70 A"/>
    <property type="chains" value="B=1-682"/>
</dbReference>
<dbReference type="PDBsum" id="1SVJ"/>
<dbReference type="PDBsum" id="1U7Q"/>
<dbReference type="PDBsum" id="2A00"/>
<dbReference type="PDBsum" id="2A29"/>
<dbReference type="PDBsum" id="5MRW"/>
<dbReference type="PDBsum" id="6HRA"/>
<dbReference type="PDBsum" id="6HRB"/>
<dbReference type="PDBsum" id="7BGY"/>
<dbReference type="PDBsum" id="7BH1"/>
<dbReference type="PDBsum" id="7BH2"/>
<dbReference type="PDBsum" id="7LC3"/>
<dbReference type="PDBsum" id="7LC6"/>
<dbReference type="PDBsum" id="7NNL"/>
<dbReference type="PDBsum" id="7NNP"/>
<dbReference type="PDBsum" id="7ZRD"/>
<dbReference type="PDBsum" id="7ZRE"/>
<dbReference type="PDBsum" id="7ZRG"/>
<dbReference type="PDBsum" id="7ZRH"/>
<dbReference type="PDBsum" id="7ZRI"/>
<dbReference type="PDBsum" id="7ZRJ"/>
<dbReference type="PDBsum" id="7ZRK"/>
<dbReference type="PDBsum" id="7ZRL"/>
<dbReference type="PDBsum" id="7ZRM"/>
<dbReference type="EMDB" id="EMD-0257"/>
<dbReference type="EMDB" id="EMD-0258"/>
<dbReference type="EMDB" id="EMD-12184"/>
<dbReference type="EMDB" id="EMD-12185"/>
<dbReference type="EMDB" id="EMD-12186"/>
<dbReference type="EMDB" id="EMD-14911"/>
<dbReference type="EMDB" id="EMD-14913"/>
<dbReference type="EMDB" id="EMD-14914"/>
<dbReference type="EMDB" id="EMD-14915"/>
<dbReference type="EMDB" id="EMD-14916"/>
<dbReference type="EMDB" id="EMD-23268"/>
<dbReference type="EMDB" id="EMD-23269"/>
<dbReference type="EMDB" id="EMD-23342"/>
<dbReference type="EMDB" id="EMD-23343"/>
<dbReference type="EMDB" id="EMD-23344"/>
<dbReference type="EMDB" id="EMD-23346"/>
<dbReference type="EMDB" id="EMD-23347"/>
<dbReference type="EMDB" id="EMD-23348"/>
<dbReference type="EMDB" id="EMD-23349"/>
<dbReference type="EMDB" id="EMD-23353"/>
<dbReference type="EMDB" id="EMD-23354"/>
<dbReference type="SMR" id="P03960"/>
<dbReference type="BioGRID" id="4263067">
    <property type="interactions" value="28"/>
</dbReference>
<dbReference type="ComplexPortal" id="CPX-3564">
    <property type="entry name" value="KdpFABC potassium import complex"/>
</dbReference>
<dbReference type="FunCoup" id="P03960">
    <property type="interactions" value="608"/>
</dbReference>
<dbReference type="IntAct" id="P03960">
    <property type="interactions" value="9"/>
</dbReference>
<dbReference type="MINT" id="P03960"/>
<dbReference type="STRING" id="511145.b0697"/>
<dbReference type="DrugBank" id="DB04395">
    <property type="generic name" value="Phosphoaminophosphonic Acid-Adenylate Ester"/>
</dbReference>
<dbReference type="TCDB" id="3.A.3.7.1">
    <property type="family name" value="the p-type atpase (p-atpase) superfamily"/>
</dbReference>
<dbReference type="iPTMnet" id="P03960"/>
<dbReference type="PaxDb" id="511145-b0697"/>
<dbReference type="EnsemblBacteria" id="AAC73791">
    <property type="protein sequence ID" value="AAC73791"/>
    <property type="gene ID" value="b0697"/>
</dbReference>
<dbReference type="GeneID" id="947450"/>
<dbReference type="KEGG" id="ecj:JW0685"/>
<dbReference type="KEGG" id="eco:b0697"/>
<dbReference type="KEGG" id="ecoc:C3026_03480"/>
<dbReference type="PATRIC" id="fig|1411691.4.peg.1578"/>
<dbReference type="EchoBASE" id="EB0509"/>
<dbReference type="eggNOG" id="COG2216">
    <property type="taxonomic scope" value="Bacteria"/>
</dbReference>
<dbReference type="InParanoid" id="P03960"/>
<dbReference type="OMA" id="ILWLWFT"/>
<dbReference type="OrthoDB" id="9814270at2"/>
<dbReference type="PhylomeDB" id="P03960"/>
<dbReference type="BioCyc" id="EcoCyc:KDPB-MONOMER"/>
<dbReference type="BioCyc" id="MetaCyc:KDPB-MONOMER"/>
<dbReference type="BRENDA" id="7.2.2.6">
    <property type="organism ID" value="2026"/>
</dbReference>
<dbReference type="EvolutionaryTrace" id="P03960"/>
<dbReference type="PRO" id="PR:P03960"/>
<dbReference type="Proteomes" id="UP000000625">
    <property type="component" value="Chromosome"/>
</dbReference>
<dbReference type="GO" id="GO:0005886">
    <property type="term" value="C:plasma membrane"/>
    <property type="evidence" value="ECO:0000314"/>
    <property type="project" value="EcoCyc"/>
</dbReference>
<dbReference type="GO" id="GO:0031004">
    <property type="term" value="C:potassium ion-transporting ATPase complex"/>
    <property type="evidence" value="ECO:0000314"/>
    <property type="project" value="EcoCyc"/>
</dbReference>
<dbReference type="GO" id="GO:1903103">
    <property type="term" value="C:potassium:proton antiporter complex"/>
    <property type="evidence" value="ECO:0000353"/>
    <property type="project" value="ComplexPortal"/>
</dbReference>
<dbReference type="GO" id="GO:0005524">
    <property type="term" value="F:ATP binding"/>
    <property type="evidence" value="ECO:0007669"/>
    <property type="project" value="UniProtKB-UniRule"/>
</dbReference>
<dbReference type="GO" id="GO:0016887">
    <property type="term" value="F:ATP hydrolysis activity"/>
    <property type="evidence" value="ECO:0007669"/>
    <property type="project" value="InterPro"/>
</dbReference>
<dbReference type="GO" id="GO:0000287">
    <property type="term" value="F:magnesium ion binding"/>
    <property type="evidence" value="ECO:0007669"/>
    <property type="project" value="UniProtKB-UniRule"/>
</dbReference>
<dbReference type="GO" id="GO:0008556">
    <property type="term" value="F:P-type potassium transmembrane transporter activity"/>
    <property type="evidence" value="ECO:0000314"/>
    <property type="project" value="EcoCyc"/>
</dbReference>
<dbReference type="GO" id="GO:0098655">
    <property type="term" value="P:monoatomic cation transmembrane transport"/>
    <property type="evidence" value="ECO:0000314"/>
    <property type="project" value="EcoCyc"/>
</dbReference>
<dbReference type="GO" id="GO:0071805">
    <property type="term" value="P:potassium ion transmembrane transport"/>
    <property type="evidence" value="ECO:0000314"/>
    <property type="project" value="EcoCyc"/>
</dbReference>
<dbReference type="GO" id="GO:0006813">
    <property type="term" value="P:potassium ion transport"/>
    <property type="evidence" value="ECO:0000314"/>
    <property type="project" value="ComplexPortal"/>
</dbReference>
<dbReference type="CDD" id="cd02078">
    <property type="entry name" value="P-type_ATPase_K"/>
    <property type="match status" value="1"/>
</dbReference>
<dbReference type="FunFam" id="2.70.150.10:FF:000010">
    <property type="entry name" value="Potassium-transporting ATPase ATP-binding subunit"/>
    <property type="match status" value="1"/>
</dbReference>
<dbReference type="FunFam" id="3.40.1110.10:FF:000007">
    <property type="entry name" value="Potassium-transporting ATPase ATP-binding subunit"/>
    <property type="match status" value="1"/>
</dbReference>
<dbReference type="Gene3D" id="3.40.1110.10">
    <property type="entry name" value="Calcium-transporting ATPase, cytoplasmic domain N"/>
    <property type="match status" value="1"/>
</dbReference>
<dbReference type="Gene3D" id="2.70.150.10">
    <property type="entry name" value="Calcium-transporting ATPase, cytoplasmic transduction domain A"/>
    <property type="match status" value="1"/>
</dbReference>
<dbReference type="Gene3D" id="3.40.50.1000">
    <property type="entry name" value="HAD superfamily/HAD-like"/>
    <property type="match status" value="1"/>
</dbReference>
<dbReference type="HAMAP" id="MF_00285">
    <property type="entry name" value="KdpB"/>
    <property type="match status" value="1"/>
</dbReference>
<dbReference type="InterPro" id="IPR023299">
    <property type="entry name" value="ATPase_P-typ_cyto_dom_N"/>
</dbReference>
<dbReference type="InterPro" id="IPR018303">
    <property type="entry name" value="ATPase_P-typ_P_site"/>
</dbReference>
<dbReference type="InterPro" id="IPR023298">
    <property type="entry name" value="ATPase_P-typ_TM_dom_sf"/>
</dbReference>
<dbReference type="InterPro" id="IPR008250">
    <property type="entry name" value="ATPase_P-typ_transduc_dom_A_sf"/>
</dbReference>
<dbReference type="InterPro" id="IPR036412">
    <property type="entry name" value="HAD-like_sf"/>
</dbReference>
<dbReference type="InterPro" id="IPR023214">
    <property type="entry name" value="HAD_sf"/>
</dbReference>
<dbReference type="InterPro" id="IPR006391">
    <property type="entry name" value="P-type_ATPase_bsu_IA"/>
</dbReference>
<dbReference type="InterPro" id="IPR001757">
    <property type="entry name" value="P_typ_ATPase"/>
</dbReference>
<dbReference type="InterPro" id="IPR044492">
    <property type="entry name" value="P_typ_ATPase_HD_dom"/>
</dbReference>
<dbReference type="NCBIfam" id="TIGR01494">
    <property type="entry name" value="ATPase_P-type"/>
    <property type="match status" value="2"/>
</dbReference>
<dbReference type="NCBIfam" id="TIGR01497">
    <property type="entry name" value="kdpB"/>
    <property type="match status" value="1"/>
</dbReference>
<dbReference type="PANTHER" id="PTHR43743">
    <property type="entry name" value="POTASSIUM-TRANSPORTING ATPASE ATP-BINDING SUBUNIT"/>
    <property type="match status" value="1"/>
</dbReference>
<dbReference type="PANTHER" id="PTHR43743:SF1">
    <property type="entry name" value="POTASSIUM-TRANSPORTING ATPASE ATP-BINDING SUBUNIT"/>
    <property type="match status" value="1"/>
</dbReference>
<dbReference type="Pfam" id="PF00122">
    <property type="entry name" value="E1-E2_ATPase"/>
    <property type="match status" value="1"/>
</dbReference>
<dbReference type="Pfam" id="PF00702">
    <property type="entry name" value="Hydrolase"/>
    <property type="match status" value="1"/>
</dbReference>
<dbReference type="PRINTS" id="PR00119">
    <property type="entry name" value="CATATPASE"/>
</dbReference>
<dbReference type="SFLD" id="SFLDG00002">
    <property type="entry name" value="C1.7:_P-type_atpase_like"/>
    <property type="match status" value="1"/>
</dbReference>
<dbReference type="SFLD" id="SFLDF00027">
    <property type="entry name" value="p-type_atpase"/>
    <property type="match status" value="1"/>
</dbReference>
<dbReference type="SUPFAM" id="SSF81653">
    <property type="entry name" value="Calcium ATPase, transduction domain A"/>
    <property type="match status" value="1"/>
</dbReference>
<dbReference type="SUPFAM" id="SSF81665">
    <property type="entry name" value="Calcium ATPase, transmembrane domain M"/>
    <property type="match status" value="1"/>
</dbReference>
<dbReference type="SUPFAM" id="SSF56784">
    <property type="entry name" value="HAD-like"/>
    <property type="match status" value="1"/>
</dbReference>
<dbReference type="SUPFAM" id="SSF81660">
    <property type="entry name" value="Metal cation-transporting ATPase, ATP-binding domain N"/>
    <property type="match status" value="1"/>
</dbReference>
<dbReference type="PROSITE" id="PS00154">
    <property type="entry name" value="ATPASE_E1_E2"/>
    <property type="match status" value="1"/>
</dbReference>
<name>KDPB_ECOLI</name>